<evidence type="ECO:0000255" key="1">
    <source>
        <dbReference type="HAMAP-Rule" id="MF_00313"/>
    </source>
</evidence>
<reference key="1">
    <citation type="journal article" date="2002" name="Nucleic Acids Res.">
        <title>Genome sequence of Shigella flexneri 2a: insights into pathogenicity through comparison with genomes of Escherichia coli K12 and O157.</title>
        <authorList>
            <person name="Jin Q."/>
            <person name="Yuan Z."/>
            <person name="Xu J."/>
            <person name="Wang Y."/>
            <person name="Shen Y."/>
            <person name="Lu W."/>
            <person name="Wang J."/>
            <person name="Liu H."/>
            <person name="Yang J."/>
            <person name="Yang F."/>
            <person name="Zhang X."/>
            <person name="Zhang J."/>
            <person name="Yang G."/>
            <person name="Wu H."/>
            <person name="Qu D."/>
            <person name="Dong J."/>
            <person name="Sun L."/>
            <person name="Xue Y."/>
            <person name="Zhao A."/>
            <person name="Gao Y."/>
            <person name="Zhu J."/>
            <person name="Kan B."/>
            <person name="Ding K."/>
            <person name="Chen S."/>
            <person name="Cheng H."/>
            <person name="Yao Z."/>
            <person name="He B."/>
            <person name="Chen R."/>
            <person name="Ma D."/>
            <person name="Qiang B."/>
            <person name="Wen Y."/>
            <person name="Hou Y."/>
            <person name="Yu J."/>
        </authorList>
    </citation>
    <scope>NUCLEOTIDE SEQUENCE [LARGE SCALE GENOMIC DNA]</scope>
    <source>
        <strain>301 / Serotype 2a</strain>
    </source>
</reference>
<reference key="2">
    <citation type="journal article" date="2003" name="Infect. Immun.">
        <title>Complete genome sequence and comparative genomics of Shigella flexneri serotype 2a strain 2457T.</title>
        <authorList>
            <person name="Wei J."/>
            <person name="Goldberg M.B."/>
            <person name="Burland V."/>
            <person name="Venkatesan M.M."/>
            <person name="Deng W."/>
            <person name="Fournier G."/>
            <person name="Mayhew G.F."/>
            <person name="Plunkett G. III"/>
            <person name="Rose D.J."/>
            <person name="Darling A."/>
            <person name="Mau B."/>
            <person name="Perna N.T."/>
            <person name="Payne S.M."/>
            <person name="Runyen-Janecky L.J."/>
            <person name="Zhou S."/>
            <person name="Schwartz D.C."/>
            <person name="Blattner F.R."/>
        </authorList>
    </citation>
    <scope>NUCLEOTIDE SEQUENCE [LARGE SCALE GENOMIC DNA]</scope>
    <source>
        <strain>ATCC 700930 / 2457T / Serotype 2a</strain>
    </source>
</reference>
<sequence>MAVAMDNAILENILRQVRPLIGQGKVADYIPALATVDGSRLGIAICTVDGQLFQAGDAQERFSIQSISKVLSLVVAMRHYSEEEIWQRVGKDPSGSPFNSLVQLEMEQGIPRNPFINTGALVVCDMLQGRLSAPRQRMLEVVRGLSGVSDISYDTVVARSEFEHSARNAAIAWLMKSFGNFHHDVTTVLQNYFHYCALKMSCVELARTFVFLANQGKAIHIDEPVVTPMQARQINALMATSGMYQNAGEFAWRVGLPAKSGVGGGIVAIVPHEMAIAVWSPELDDAGNSLAGIAVLEQLTKQLGRSVY</sequence>
<organism>
    <name type="scientific">Shigella flexneri</name>
    <dbReference type="NCBI Taxonomy" id="623"/>
    <lineage>
        <taxon>Bacteria</taxon>
        <taxon>Pseudomonadati</taxon>
        <taxon>Pseudomonadota</taxon>
        <taxon>Gammaproteobacteria</taxon>
        <taxon>Enterobacterales</taxon>
        <taxon>Enterobacteriaceae</taxon>
        <taxon>Shigella</taxon>
    </lineage>
</organism>
<protein>
    <recommendedName>
        <fullName evidence="1">Glutaminase 2</fullName>
        <ecNumber evidence="1">3.5.1.2</ecNumber>
    </recommendedName>
</protein>
<proteinExistence type="inferred from homology"/>
<feature type="chain" id="PRO_0000110625" description="Glutaminase 2">
    <location>
        <begin position="1"/>
        <end position="308"/>
    </location>
</feature>
<feature type="binding site" evidence="1">
    <location>
        <position position="66"/>
    </location>
    <ligand>
        <name>substrate</name>
    </ligand>
</feature>
<feature type="binding site" evidence="1">
    <location>
        <position position="117"/>
    </location>
    <ligand>
        <name>substrate</name>
    </ligand>
</feature>
<feature type="binding site" evidence="1">
    <location>
        <position position="161"/>
    </location>
    <ligand>
        <name>substrate</name>
    </ligand>
</feature>
<feature type="binding site" evidence="1">
    <location>
        <position position="168"/>
    </location>
    <ligand>
        <name>substrate</name>
    </ligand>
</feature>
<feature type="binding site" evidence="1">
    <location>
        <position position="192"/>
    </location>
    <ligand>
        <name>substrate</name>
    </ligand>
</feature>
<feature type="binding site" evidence="1">
    <location>
        <position position="244"/>
    </location>
    <ligand>
        <name>substrate</name>
    </ligand>
</feature>
<feature type="binding site" evidence="1">
    <location>
        <position position="262"/>
    </location>
    <ligand>
        <name>substrate</name>
    </ligand>
</feature>
<gene>
    <name evidence="1" type="primary">glsA2</name>
    <name type="ordered locus">SF1569</name>
    <name type="ordered locus">S1696</name>
</gene>
<accession>Q83RE2</accession>
<keyword id="KW-0378">Hydrolase</keyword>
<keyword id="KW-1185">Reference proteome</keyword>
<name>GLSA2_SHIFL</name>
<dbReference type="EC" id="3.5.1.2" evidence="1"/>
<dbReference type="EMBL" id="AE005674">
    <property type="protein sequence ID" value="AAN43157.1"/>
    <property type="molecule type" value="Genomic_DNA"/>
</dbReference>
<dbReference type="EMBL" id="AE014073">
    <property type="protein sequence ID" value="AAP17051.1"/>
    <property type="molecule type" value="Genomic_DNA"/>
</dbReference>
<dbReference type="SMR" id="Q83RE2"/>
<dbReference type="STRING" id="198214.SF1569"/>
<dbReference type="PaxDb" id="198214-SF1569"/>
<dbReference type="KEGG" id="sfl:SF1569"/>
<dbReference type="KEGG" id="sfx:S1696"/>
<dbReference type="PATRIC" id="fig|198214.7.peg.1855"/>
<dbReference type="HOGENOM" id="CLU_027932_1_1_6"/>
<dbReference type="Proteomes" id="UP000001006">
    <property type="component" value="Chromosome"/>
</dbReference>
<dbReference type="Proteomes" id="UP000002673">
    <property type="component" value="Chromosome"/>
</dbReference>
<dbReference type="GO" id="GO:0004359">
    <property type="term" value="F:glutaminase activity"/>
    <property type="evidence" value="ECO:0007669"/>
    <property type="project" value="UniProtKB-UniRule"/>
</dbReference>
<dbReference type="GO" id="GO:0006537">
    <property type="term" value="P:glutamate biosynthetic process"/>
    <property type="evidence" value="ECO:0007669"/>
    <property type="project" value="TreeGrafter"/>
</dbReference>
<dbReference type="GO" id="GO:0006543">
    <property type="term" value="P:glutamine catabolic process"/>
    <property type="evidence" value="ECO:0007669"/>
    <property type="project" value="TreeGrafter"/>
</dbReference>
<dbReference type="FunFam" id="3.40.710.10:FF:000005">
    <property type="entry name" value="Glutaminase"/>
    <property type="match status" value="1"/>
</dbReference>
<dbReference type="Gene3D" id="3.40.710.10">
    <property type="entry name" value="DD-peptidase/beta-lactamase superfamily"/>
    <property type="match status" value="1"/>
</dbReference>
<dbReference type="HAMAP" id="MF_00313">
    <property type="entry name" value="Glutaminase"/>
    <property type="match status" value="1"/>
</dbReference>
<dbReference type="InterPro" id="IPR012338">
    <property type="entry name" value="Beta-lactam/transpept-like"/>
</dbReference>
<dbReference type="InterPro" id="IPR015868">
    <property type="entry name" value="Glutaminase"/>
</dbReference>
<dbReference type="NCBIfam" id="TIGR03814">
    <property type="entry name" value="Gln_ase"/>
    <property type="match status" value="1"/>
</dbReference>
<dbReference type="NCBIfam" id="NF002132">
    <property type="entry name" value="PRK00971.1-1"/>
    <property type="match status" value="1"/>
</dbReference>
<dbReference type="NCBIfam" id="NF002133">
    <property type="entry name" value="PRK00971.1-2"/>
    <property type="match status" value="1"/>
</dbReference>
<dbReference type="PANTHER" id="PTHR12544">
    <property type="entry name" value="GLUTAMINASE"/>
    <property type="match status" value="1"/>
</dbReference>
<dbReference type="PANTHER" id="PTHR12544:SF29">
    <property type="entry name" value="GLUTAMINASE"/>
    <property type="match status" value="1"/>
</dbReference>
<dbReference type="Pfam" id="PF04960">
    <property type="entry name" value="Glutaminase"/>
    <property type="match status" value="1"/>
</dbReference>
<dbReference type="SUPFAM" id="SSF56601">
    <property type="entry name" value="beta-lactamase/transpeptidase-like"/>
    <property type="match status" value="1"/>
</dbReference>
<comment type="catalytic activity">
    <reaction evidence="1">
        <text>L-glutamine + H2O = L-glutamate + NH4(+)</text>
        <dbReference type="Rhea" id="RHEA:15889"/>
        <dbReference type="ChEBI" id="CHEBI:15377"/>
        <dbReference type="ChEBI" id="CHEBI:28938"/>
        <dbReference type="ChEBI" id="CHEBI:29985"/>
        <dbReference type="ChEBI" id="CHEBI:58359"/>
        <dbReference type="EC" id="3.5.1.2"/>
    </reaction>
</comment>
<comment type="subunit">
    <text evidence="1">Homotetramer.</text>
</comment>
<comment type="similarity">
    <text evidence="1">Belongs to the glutaminase family.</text>
</comment>